<comment type="function">
    <text>Participates in sulfate respiration coupled with phosphorylation by transferring electrons from the enzyme dehydrogenase to ferredoxin.</text>
</comment>
<comment type="biophysicochemical properties">
    <redoxPotential>
        <text>E(0) are -200 mV, -210 mV, -370 mV and -380 mV.</text>
    </redoxPotential>
</comment>
<comment type="subunit">
    <text>Monomer.</text>
</comment>
<comment type="subcellular location">
    <subcellularLocation>
        <location>Periplasm</location>
    </subcellularLocation>
</comment>
<comment type="PTM">
    <text>Binds 4 heme groups per subunit.</text>
</comment>
<name>CYC35_DESAC</name>
<sequence length="30" mass="3020">IGAGVGRDGTIAATKGKAKTLAELIXMYDS</sequence>
<keyword id="KW-0903">Direct protein sequencing</keyword>
<keyword id="KW-0249">Electron transport</keyword>
<keyword id="KW-0349">Heme</keyword>
<keyword id="KW-0408">Iron</keyword>
<keyword id="KW-0479">Metal-binding</keyword>
<keyword id="KW-0574">Periplasm</keyword>
<keyword id="KW-0763">Sulfate respiration</keyword>
<keyword id="KW-0813">Transport</keyword>
<organism>
    <name type="scientific">Desulfuromonas acetoxidans</name>
    <name type="common">Chloropseudomonas ethylica</name>
    <dbReference type="NCBI Taxonomy" id="891"/>
    <lineage>
        <taxon>Bacteria</taxon>
        <taxon>Pseudomonadati</taxon>
        <taxon>Thermodesulfobacteriota</taxon>
        <taxon>Desulfuromonadia</taxon>
        <taxon>Desulfuromonadales</taxon>
        <taxon>Desulfuromonadaceae</taxon>
        <taxon>Desulfuromonas</taxon>
    </lineage>
</organism>
<proteinExistence type="evidence at protein level"/>
<reference key="1">
    <citation type="journal article" date="1997" name="Biochemistry">
        <title>Biochemical and spectroscopic characterization of two new cytochromes isolated from Desulfuromonas acetoxidans.</title>
        <authorList>
            <person name="Bruschi M."/>
            <person name="Woudstra M."/>
            <person name="Guigliarelli B."/>
            <person name="Asso M."/>
            <person name="Lojou E."/>
            <person name="Petillot Y."/>
            <person name="Abergel C."/>
        </authorList>
    </citation>
    <scope>PROTEIN SEQUENCE</scope>
    <scope>CHARACTERIZATION</scope>
</reference>
<accession>P81079</accession>
<dbReference type="GO" id="GO:0042597">
    <property type="term" value="C:periplasmic space"/>
    <property type="evidence" value="ECO:0007669"/>
    <property type="project" value="UniProtKB-SubCell"/>
</dbReference>
<dbReference type="GO" id="GO:0046872">
    <property type="term" value="F:metal ion binding"/>
    <property type="evidence" value="ECO:0007669"/>
    <property type="project" value="UniProtKB-KW"/>
</dbReference>
<dbReference type="GO" id="GO:0009061">
    <property type="term" value="P:anaerobic respiration"/>
    <property type="evidence" value="ECO:0007669"/>
    <property type="project" value="UniProtKB-KW"/>
</dbReference>
<feature type="chain" id="PRO_0000108356" description="Cytochrome c3, 50 kDa">
    <location>
        <begin position="1"/>
        <end position="30" status="greater than"/>
    </location>
</feature>
<feature type="non-terminal residue">
    <location>
        <position position="30"/>
    </location>
</feature>
<protein>
    <recommendedName>
        <fullName>Cytochrome c3, 50 kDa</fullName>
    </recommendedName>
</protein>